<evidence type="ECO:0000255" key="1">
    <source>
        <dbReference type="HAMAP-Rule" id="MF_01864"/>
    </source>
</evidence>
<evidence type="ECO:0000255" key="2">
    <source>
        <dbReference type="PROSITE-ProRule" id="PRU01266"/>
    </source>
</evidence>
<organism>
    <name type="scientific">Rhodospirillum rubrum (strain ATCC 11170 / ATH 1.1.1 / DSM 467 / LMG 4362 / NCIMB 8255 / S1)</name>
    <dbReference type="NCBI Taxonomy" id="269796"/>
    <lineage>
        <taxon>Bacteria</taxon>
        <taxon>Pseudomonadati</taxon>
        <taxon>Pseudomonadota</taxon>
        <taxon>Alphaproteobacteria</taxon>
        <taxon>Rhodospirillales</taxon>
        <taxon>Rhodospirillaceae</taxon>
        <taxon>Rhodospirillum</taxon>
    </lineage>
</organism>
<name>MIAB_RHORT</name>
<protein>
    <recommendedName>
        <fullName evidence="1">tRNA-2-methylthio-N(6)-dimethylallyladenosine synthase</fullName>
        <ecNumber evidence="1">2.8.4.3</ecNumber>
    </recommendedName>
    <alternativeName>
        <fullName evidence="1">(Dimethylallyl)adenosine tRNA methylthiotransferase MiaB</fullName>
    </alternativeName>
    <alternativeName>
        <fullName evidence="1">tRNA-i(6)A37 methylthiotransferase</fullName>
    </alternativeName>
</protein>
<gene>
    <name evidence="1" type="primary">miaB</name>
    <name type="ordered locus">Rru_A3770</name>
</gene>
<feature type="chain" id="PRO_0000374500" description="tRNA-2-methylthio-N(6)-dimethylallyladenosine synthase">
    <location>
        <begin position="1"/>
        <end position="467"/>
    </location>
</feature>
<feature type="domain" description="MTTase N-terminal" evidence="1">
    <location>
        <begin position="4"/>
        <end position="124"/>
    </location>
</feature>
<feature type="domain" description="Radical SAM core" evidence="2">
    <location>
        <begin position="147"/>
        <end position="379"/>
    </location>
</feature>
<feature type="domain" description="TRAM" evidence="1">
    <location>
        <begin position="382"/>
        <end position="444"/>
    </location>
</feature>
<feature type="binding site" evidence="1">
    <location>
        <position position="13"/>
    </location>
    <ligand>
        <name>[4Fe-4S] cluster</name>
        <dbReference type="ChEBI" id="CHEBI:49883"/>
        <label>1</label>
    </ligand>
</feature>
<feature type="binding site" evidence="1">
    <location>
        <position position="49"/>
    </location>
    <ligand>
        <name>[4Fe-4S] cluster</name>
        <dbReference type="ChEBI" id="CHEBI:49883"/>
        <label>1</label>
    </ligand>
</feature>
<feature type="binding site" evidence="1">
    <location>
        <position position="87"/>
    </location>
    <ligand>
        <name>[4Fe-4S] cluster</name>
        <dbReference type="ChEBI" id="CHEBI:49883"/>
        <label>1</label>
    </ligand>
</feature>
<feature type="binding site" evidence="1">
    <location>
        <position position="161"/>
    </location>
    <ligand>
        <name>[4Fe-4S] cluster</name>
        <dbReference type="ChEBI" id="CHEBI:49883"/>
        <label>2</label>
        <note>4Fe-4S-S-AdoMet</note>
    </ligand>
</feature>
<feature type="binding site" evidence="1">
    <location>
        <position position="165"/>
    </location>
    <ligand>
        <name>[4Fe-4S] cluster</name>
        <dbReference type="ChEBI" id="CHEBI:49883"/>
        <label>2</label>
        <note>4Fe-4S-S-AdoMet</note>
    </ligand>
</feature>
<feature type="binding site" evidence="1">
    <location>
        <position position="168"/>
    </location>
    <ligand>
        <name>[4Fe-4S] cluster</name>
        <dbReference type="ChEBI" id="CHEBI:49883"/>
        <label>2</label>
        <note>4Fe-4S-S-AdoMet</note>
    </ligand>
</feature>
<keyword id="KW-0004">4Fe-4S</keyword>
<keyword id="KW-0963">Cytoplasm</keyword>
<keyword id="KW-0408">Iron</keyword>
<keyword id="KW-0411">Iron-sulfur</keyword>
<keyword id="KW-0479">Metal-binding</keyword>
<keyword id="KW-1185">Reference proteome</keyword>
<keyword id="KW-0949">S-adenosyl-L-methionine</keyword>
<keyword id="KW-0808">Transferase</keyword>
<keyword id="KW-0819">tRNA processing</keyword>
<proteinExistence type="inferred from homology"/>
<reference key="1">
    <citation type="journal article" date="2011" name="Stand. Genomic Sci.">
        <title>Complete genome sequence of Rhodospirillum rubrum type strain (S1).</title>
        <authorList>
            <person name="Munk A.C."/>
            <person name="Copeland A."/>
            <person name="Lucas S."/>
            <person name="Lapidus A."/>
            <person name="Del Rio T.G."/>
            <person name="Barry K."/>
            <person name="Detter J.C."/>
            <person name="Hammon N."/>
            <person name="Israni S."/>
            <person name="Pitluck S."/>
            <person name="Brettin T."/>
            <person name="Bruce D."/>
            <person name="Han C."/>
            <person name="Tapia R."/>
            <person name="Gilna P."/>
            <person name="Schmutz J."/>
            <person name="Larimer F."/>
            <person name="Land M."/>
            <person name="Kyrpides N.C."/>
            <person name="Mavromatis K."/>
            <person name="Richardson P."/>
            <person name="Rohde M."/>
            <person name="Goeker M."/>
            <person name="Klenk H.P."/>
            <person name="Zhang Y."/>
            <person name="Roberts G.P."/>
            <person name="Reslewic S."/>
            <person name="Schwartz D.C."/>
        </authorList>
    </citation>
    <scope>NUCLEOTIDE SEQUENCE [LARGE SCALE GENOMIC DNA]</scope>
    <source>
        <strain>ATCC 11170 / ATH 1.1.1 / DSM 467 / LMG 4362 / NCIMB 8255 / S1</strain>
    </source>
</reference>
<dbReference type="EC" id="2.8.4.3" evidence="1"/>
<dbReference type="EMBL" id="CP000230">
    <property type="protein sequence ID" value="ABC24564.1"/>
    <property type="molecule type" value="Genomic_DNA"/>
</dbReference>
<dbReference type="RefSeq" id="WP_011391517.1">
    <property type="nucleotide sequence ID" value="NC_007643.1"/>
</dbReference>
<dbReference type="RefSeq" id="YP_428851.1">
    <property type="nucleotide sequence ID" value="NC_007643.1"/>
</dbReference>
<dbReference type="SMR" id="Q2RMT1"/>
<dbReference type="STRING" id="269796.Rru_A3770"/>
<dbReference type="EnsemblBacteria" id="ABC24564">
    <property type="protein sequence ID" value="ABC24564"/>
    <property type="gene ID" value="Rru_A3770"/>
</dbReference>
<dbReference type="KEGG" id="rru:Rru_A3770"/>
<dbReference type="PATRIC" id="fig|269796.9.peg.3892"/>
<dbReference type="eggNOG" id="COG0621">
    <property type="taxonomic scope" value="Bacteria"/>
</dbReference>
<dbReference type="HOGENOM" id="CLU_018697_2_2_5"/>
<dbReference type="PhylomeDB" id="Q2RMT1"/>
<dbReference type="Proteomes" id="UP000001929">
    <property type="component" value="Chromosome"/>
</dbReference>
<dbReference type="GO" id="GO:0005829">
    <property type="term" value="C:cytosol"/>
    <property type="evidence" value="ECO:0007669"/>
    <property type="project" value="TreeGrafter"/>
</dbReference>
<dbReference type="GO" id="GO:0051539">
    <property type="term" value="F:4 iron, 4 sulfur cluster binding"/>
    <property type="evidence" value="ECO:0007669"/>
    <property type="project" value="UniProtKB-UniRule"/>
</dbReference>
<dbReference type="GO" id="GO:0046872">
    <property type="term" value="F:metal ion binding"/>
    <property type="evidence" value="ECO:0007669"/>
    <property type="project" value="UniProtKB-KW"/>
</dbReference>
<dbReference type="GO" id="GO:0035597">
    <property type="term" value="F:N6-isopentenyladenosine methylthiotransferase activity"/>
    <property type="evidence" value="ECO:0007669"/>
    <property type="project" value="TreeGrafter"/>
</dbReference>
<dbReference type="CDD" id="cd01335">
    <property type="entry name" value="Radical_SAM"/>
    <property type="match status" value="1"/>
</dbReference>
<dbReference type="FunFam" id="3.40.50.12160:FF:000003">
    <property type="entry name" value="CDK5 regulatory subunit-associated protein 1"/>
    <property type="match status" value="1"/>
</dbReference>
<dbReference type="FunFam" id="3.80.30.20:FF:000001">
    <property type="entry name" value="tRNA-2-methylthio-N(6)-dimethylallyladenosine synthase 2"/>
    <property type="match status" value="1"/>
</dbReference>
<dbReference type="Gene3D" id="3.40.50.12160">
    <property type="entry name" value="Methylthiotransferase, N-terminal domain"/>
    <property type="match status" value="1"/>
</dbReference>
<dbReference type="Gene3D" id="3.80.30.20">
    <property type="entry name" value="tm_1862 like domain"/>
    <property type="match status" value="1"/>
</dbReference>
<dbReference type="HAMAP" id="MF_01864">
    <property type="entry name" value="tRNA_metthiotr_MiaB"/>
    <property type="match status" value="1"/>
</dbReference>
<dbReference type="InterPro" id="IPR006638">
    <property type="entry name" value="Elp3/MiaA/NifB-like_rSAM"/>
</dbReference>
<dbReference type="InterPro" id="IPR005839">
    <property type="entry name" value="Methylthiotransferase"/>
</dbReference>
<dbReference type="InterPro" id="IPR020612">
    <property type="entry name" value="Methylthiotransferase_CS"/>
</dbReference>
<dbReference type="InterPro" id="IPR013848">
    <property type="entry name" value="Methylthiotransferase_N"/>
</dbReference>
<dbReference type="InterPro" id="IPR038135">
    <property type="entry name" value="Methylthiotransferase_N_sf"/>
</dbReference>
<dbReference type="InterPro" id="IPR006463">
    <property type="entry name" value="MiaB_methiolase"/>
</dbReference>
<dbReference type="InterPro" id="IPR007197">
    <property type="entry name" value="rSAM"/>
</dbReference>
<dbReference type="InterPro" id="IPR023404">
    <property type="entry name" value="rSAM_horseshoe"/>
</dbReference>
<dbReference type="InterPro" id="IPR002792">
    <property type="entry name" value="TRAM_dom"/>
</dbReference>
<dbReference type="NCBIfam" id="TIGR01574">
    <property type="entry name" value="miaB-methiolase"/>
    <property type="match status" value="1"/>
</dbReference>
<dbReference type="NCBIfam" id="TIGR00089">
    <property type="entry name" value="MiaB/RimO family radical SAM methylthiotransferase"/>
    <property type="match status" value="1"/>
</dbReference>
<dbReference type="PANTHER" id="PTHR43020">
    <property type="entry name" value="CDK5 REGULATORY SUBUNIT-ASSOCIATED PROTEIN 1"/>
    <property type="match status" value="1"/>
</dbReference>
<dbReference type="PANTHER" id="PTHR43020:SF2">
    <property type="entry name" value="MITOCHONDRIAL TRNA METHYLTHIOTRANSFERASE CDK5RAP1"/>
    <property type="match status" value="1"/>
</dbReference>
<dbReference type="Pfam" id="PF04055">
    <property type="entry name" value="Radical_SAM"/>
    <property type="match status" value="1"/>
</dbReference>
<dbReference type="Pfam" id="PF00919">
    <property type="entry name" value="UPF0004"/>
    <property type="match status" value="1"/>
</dbReference>
<dbReference type="SFLD" id="SFLDF00273">
    <property type="entry name" value="(dimethylallyl)adenosine_tRNA"/>
    <property type="match status" value="1"/>
</dbReference>
<dbReference type="SFLD" id="SFLDG01082">
    <property type="entry name" value="B12-binding_domain_containing"/>
    <property type="match status" value="1"/>
</dbReference>
<dbReference type="SFLD" id="SFLDS00029">
    <property type="entry name" value="Radical_SAM"/>
    <property type="match status" value="1"/>
</dbReference>
<dbReference type="SMART" id="SM00729">
    <property type="entry name" value="Elp3"/>
    <property type="match status" value="1"/>
</dbReference>
<dbReference type="SUPFAM" id="SSF102114">
    <property type="entry name" value="Radical SAM enzymes"/>
    <property type="match status" value="1"/>
</dbReference>
<dbReference type="PROSITE" id="PS51449">
    <property type="entry name" value="MTTASE_N"/>
    <property type="match status" value="1"/>
</dbReference>
<dbReference type="PROSITE" id="PS01278">
    <property type="entry name" value="MTTASE_RADICAL"/>
    <property type="match status" value="1"/>
</dbReference>
<dbReference type="PROSITE" id="PS51918">
    <property type="entry name" value="RADICAL_SAM"/>
    <property type="match status" value="1"/>
</dbReference>
<dbReference type="PROSITE" id="PS50926">
    <property type="entry name" value="TRAM"/>
    <property type="match status" value="1"/>
</dbReference>
<comment type="function">
    <text evidence="1">Catalyzes the methylthiolation of N6-(dimethylallyl)adenosine (i(6)A), leading to the formation of 2-methylthio-N6-(dimethylallyl)adenosine (ms(2)i(6)A) at position 37 in tRNAs that read codons beginning with uridine.</text>
</comment>
<comment type="catalytic activity">
    <reaction evidence="1">
        <text>N(6)-dimethylallyladenosine(37) in tRNA + (sulfur carrier)-SH + AH2 + 2 S-adenosyl-L-methionine = 2-methylsulfanyl-N(6)-dimethylallyladenosine(37) in tRNA + (sulfur carrier)-H + 5'-deoxyadenosine + L-methionine + A + S-adenosyl-L-homocysteine + 2 H(+)</text>
        <dbReference type="Rhea" id="RHEA:37067"/>
        <dbReference type="Rhea" id="RHEA-COMP:10375"/>
        <dbReference type="Rhea" id="RHEA-COMP:10376"/>
        <dbReference type="Rhea" id="RHEA-COMP:14737"/>
        <dbReference type="Rhea" id="RHEA-COMP:14739"/>
        <dbReference type="ChEBI" id="CHEBI:13193"/>
        <dbReference type="ChEBI" id="CHEBI:15378"/>
        <dbReference type="ChEBI" id="CHEBI:17319"/>
        <dbReference type="ChEBI" id="CHEBI:17499"/>
        <dbReference type="ChEBI" id="CHEBI:29917"/>
        <dbReference type="ChEBI" id="CHEBI:57844"/>
        <dbReference type="ChEBI" id="CHEBI:57856"/>
        <dbReference type="ChEBI" id="CHEBI:59789"/>
        <dbReference type="ChEBI" id="CHEBI:64428"/>
        <dbReference type="ChEBI" id="CHEBI:74415"/>
        <dbReference type="ChEBI" id="CHEBI:74417"/>
        <dbReference type="EC" id="2.8.4.3"/>
    </reaction>
</comment>
<comment type="cofactor">
    <cofactor evidence="1">
        <name>[4Fe-4S] cluster</name>
        <dbReference type="ChEBI" id="CHEBI:49883"/>
    </cofactor>
    <text evidence="1">Binds 2 [4Fe-4S] clusters. One cluster is coordinated with 3 cysteines and an exchangeable S-adenosyl-L-methionine.</text>
</comment>
<comment type="subunit">
    <text evidence="1">Monomer.</text>
</comment>
<comment type="subcellular location">
    <subcellularLocation>
        <location evidence="1">Cytoplasm</location>
    </subcellularLocation>
</comment>
<comment type="similarity">
    <text evidence="1">Belongs to the methylthiotransferase family. MiaB subfamily.</text>
</comment>
<accession>Q2RMT1</accession>
<sequence>MANRKLFIKSYGCQMNVYDAGRMADVMAPLGYDLVSEADGADLVILNTCHIREKAAEKVFSDLGRLRPFKEAMAAEGRRMLVAVAGCVAQAEGAELMARAKIVDMVVGPQAYHRLPEMVAKVERGAGRVLDTDFPIEPKFDFLPAPQAHGPSAFLSVQEGCDKFCTFCVVPYTRGAEYSRPVADVLREAALLAEGGVREITLLGQNVNAYHGEAPDGRTWGLGRLARALAEIPGVARLRYTTSHPRDVDDDLIAAHREVAALTPFIHLPVQSGSDRILAAMNRGHDVEGYRRIIDRLRAARDDMAFSSDFIVGFPGESERDFQATLALIDEVRFIQAYSFKYSPRPGTPAAALSAQLPEAEKSARLIALQARLVEIQQAFNQACVGRPMDVLLDRPGRHAGQLVGRSPWMQPVHLEAPAALLGTLAPVVVETATSNSLAARLVEGNSSMSSDRVLAEEAPPPARIRA</sequence>